<gene>
    <name evidence="1" type="primary">pheT</name>
    <name type="ordered locus">SAK_0994</name>
</gene>
<dbReference type="EC" id="6.1.1.20" evidence="1"/>
<dbReference type="EMBL" id="CP000114">
    <property type="protein sequence ID" value="ABA44598.1"/>
    <property type="molecule type" value="Genomic_DNA"/>
</dbReference>
<dbReference type="RefSeq" id="WP_000961592.1">
    <property type="nucleotide sequence ID" value="NC_007432.1"/>
</dbReference>
<dbReference type="SMR" id="Q3K1I7"/>
<dbReference type="KEGG" id="sak:SAK_0994"/>
<dbReference type="HOGENOM" id="CLU_016891_0_0_9"/>
<dbReference type="GO" id="GO:0009328">
    <property type="term" value="C:phenylalanine-tRNA ligase complex"/>
    <property type="evidence" value="ECO:0007669"/>
    <property type="project" value="TreeGrafter"/>
</dbReference>
<dbReference type="GO" id="GO:0005524">
    <property type="term" value="F:ATP binding"/>
    <property type="evidence" value="ECO:0007669"/>
    <property type="project" value="UniProtKB-UniRule"/>
</dbReference>
<dbReference type="GO" id="GO:0140096">
    <property type="term" value="F:catalytic activity, acting on a protein"/>
    <property type="evidence" value="ECO:0007669"/>
    <property type="project" value="UniProtKB-ARBA"/>
</dbReference>
<dbReference type="GO" id="GO:0000287">
    <property type="term" value="F:magnesium ion binding"/>
    <property type="evidence" value="ECO:0007669"/>
    <property type="project" value="UniProtKB-UniRule"/>
</dbReference>
<dbReference type="GO" id="GO:0004826">
    <property type="term" value="F:phenylalanine-tRNA ligase activity"/>
    <property type="evidence" value="ECO:0007669"/>
    <property type="project" value="UniProtKB-UniRule"/>
</dbReference>
<dbReference type="GO" id="GO:0016740">
    <property type="term" value="F:transferase activity"/>
    <property type="evidence" value="ECO:0007669"/>
    <property type="project" value="UniProtKB-ARBA"/>
</dbReference>
<dbReference type="GO" id="GO:0000049">
    <property type="term" value="F:tRNA binding"/>
    <property type="evidence" value="ECO:0007669"/>
    <property type="project" value="UniProtKB-KW"/>
</dbReference>
<dbReference type="GO" id="GO:0006432">
    <property type="term" value="P:phenylalanyl-tRNA aminoacylation"/>
    <property type="evidence" value="ECO:0007669"/>
    <property type="project" value="UniProtKB-UniRule"/>
</dbReference>
<dbReference type="CDD" id="cd00769">
    <property type="entry name" value="PheRS_beta_core"/>
    <property type="match status" value="1"/>
</dbReference>
<dbReference type="CDD" id="cd02796">
    <property type="entry name" value="tRNA_bind_bactPheRS"/>
    <property type="match status" value="1"/>
</dbReference>
<dbReference type="FunFam" id="2.40.50.140:FF:000045">
    <property type="entry name" value="Phenylalanine--tRNA ligase beta subunit"/>
    <property type="match status" value="1"/>
</dbReference>
<dbReference type="FunFam" id="3.30.70.380:FF:000001">
    <property type="entry name" value="Phenylalanine--tRNA ligase beta subunit"/>
    <property type="match status" value="1"/>
</dbReference>
<dbReference type="FunFam" id="3.30.930.10:FF:000022">
    <property type="entry name" value="Phenylalanine--tRNA ligase beta subunit"/>
    <property type="match status" value="1"/>
</dbReference>
<dbReference type="FunFam" id="3.50.40.10:FF:000001">
    <property type="entry name" value="Phenylalanine--tRNA ligase beta subunit"/>
    <property type="match status" value="1"/>
</dbReference>
<dbReference type="Gene3D" id="3.30.56.10">
    <property type="match status" value="2"/>
</dbReference>
<dbReference type="Gene3D" id="3.30.930.10">
    <property type="entry name" value="Bira Bifunctional Protein, Domain 2"/>
    <property type="match status" value="1"/>
</dbReference>
<dbReference type="Gene3D" id="3.30.70.380">
    <property type="entry name" value="Ferrodoxin-fold anticodon-binding domain"/>
    <property type="match status" value="1"/>
</dbReference>
<dbReference type="Gene3D" id="2.40.50.140">
    <property type="entry name" value="Nucleic acid-binding proteins"/>
    <property type="match status" value="1"/>
</dbReference>
<dbReference type="Gene3D" id="3.50.40.10">
    <property type="entry name" value="Phenylalanyl-trna Synthetase, Chain B, domain 3"/>
    <property type="match status" value="1"/>
</dbReference>
<dbReference type="HAMAP" id="MF_00283">
    <property type="entry name" value="Phe_tRNA_synth_beta1"/>
    <property type="match status" value="1"/>
</dbReference>
<dbReference type="InterPro" id="IPR045864">
    <property type="entry name" value="aa-tRNA-synth_II/BPL/LPL"/>
</dbReference>
<dbReference type="InterPro" id="IPR005146">
    <property type="entry name" value="B3/B4_tRNA-bd"/>
</dbReference>
<dbReference type="InterPro" id="IPR009061">
    <property type="entry name" value="DNA-bd_dom_put_sf"/>
</dbReference>
<dbReference type="InterPro" id="IPR005121">
    <property type="entry name" value="Fdx_antiC-bd"/>
</dbReference>
<dbReference type="InterPro" id="IPR036690">
    <property type="entry name" value="Fdx_antiC-bd_sf"/>
</dbReference>
<dbReference type="InterPro" id="IPR012340">
    <property type="entry name" value="NA-bd_OB-fold"/>
</dbReference>
<dbReference type="InterPro" id="IPR045060">
    <property type="entry name" value="Phe-tRNA-ligase_IIc_bsu"/>
</dbReference>
<dbReference type="InterPro" id="IPR004532">
    <property type="entry name" value="Phe-tRNA-ligase_IIc_bsu_bact"/>
</dbReference>
<dbReference type="InterPro" id="IPR020825">
    <property type="entry name" value="Phe-tRNA_synthase-like_B3/B4"/>
</dbReference>
<dbReference type="InterPro" id="IPR041616">
    <property type="entry name" value="PheRS_beta_core"/>
</dbReference>
<dbReference type="InterPro" id="IPR002547">
    <property type="entry name" value="tRNA-bd_dom"/>
</dbReference>
<dbReference type="InterPro" id="IPR033714">
    <property type="entry name" value="tRNA_bind_bactPheRS"/>
</dbReference>
<dbReference type="InterPro" id="IPR005147">
    <property type="entry name" value="tRNA_synthase_B5-dom"/>
</dbReference>
<dbReference type="NCBIfam" id="TIGR00472">
    <property type="entry name" value="pheT_bact"/>
    <property type="match status" value="1"/>
</dbReference>
<dbReference type="NCBIfam" id="NF045760">
    <property type="entry name" value="YtpR"/>
    <property type="match status" value="1"/>
</dbReference>
<dbReference type="PANTHER" id="PTHR10947:SF0">
    <property type="entry name" value="PHENYLALANINE--TRNA LIGASE BETA SUBUNIT"/>
    <property type="match status" value="1"/>
</dbReference>
<dbReference type="PANTHER" id="PTHR10947">
    <property type="entry name" value="PHENYLALANYL-TRNA SYNTHETASE BETA CHAIN AND LEUCINE-RICH REPEAT-CONTAINING PROTEIN 47"/>
    <property type="match status" value="1"/>
</dbReference>
<dbReference type="Pfam" id="PF03483">
    <property type="entry name" value="B3_4"/>
    <property type="match status" value="1"/>
</dbReference>
<dbReference type="Pfam" id="PF03484">
    <property type="entry name" value="B5"/>
    <property type="match status" value="1"/>
</dbReference>
<dbReference type="Pfam" id="PF03147">
    <property type="entry name" value="FDX-ACB"/>
    <property type="match status" value="1"/>
</dbReference>
<dbReference type="Pfam" id="PF01588">
    <property type="entry name" value="tRNA_bind"/>
    <property type="match status" value="1"/>
</dbReference>
<dbReference type="Pfam" id="PF17759">
    <property type="entry name" value="tRNA_synthFbeta"/>
    <property type="match status" value="1"/>
</dbReference>
<dbReference type="SMART" id="SM00873">
    <property type="entry name" value="B3_4"/>
    <property type="match status" value="1"/>
</dbReference>
<dbReference type="SMART" id="SM00874">
    <property type="entry name" value="B5"/>
    <property type="match status" value="1"/>
</dbReference>
<dbReference type="SMART" id="SM00896">
    <property type="entry name" value="FDX-ACB"/>
    <property type="match status" value="1"/>
</dbReference>
<dbReference type="SUPFAM" id="SSF54991">
    <property type="entry name" value="Anticodon-binding domain of PheRS"/>
    <property type="match status" value="1"/>
</dbReference>
<dbReference type="SUPFAM" id="SSF55681">
    <property type="entry name" value="Class II aaRS and biotin synthetases"/>
    <property type="match status" value="1"/>
</dbReference>
<dbReference type="SUPFAM" id="SSF50249">
    <property type="entry name" value="Nucleic acid-binding proteins"/>
    <property type="match status" value="1"/>
</dbReference>
<dbReference type="SUPFAM" id="SSF56037">
    <property type="entry name" value="PheT/TilS domain"/>
    <property type="match status" value="1"/>
</dbReference>
<dbReference type="SUPFAM" id="SSF46955">
    <property type="entry name" value="Putative DNA-binding domain"/>
    <property type="match status" value="1"/>
</dbReference>
<dbReference type="PROSITE" id="PS51483">
    <property type="entry name" value="B5"/>
    <property type="match status" value="1"/>
</dbReference>
<dbReference type="PROSITE" id="PS51447">
    <property type="entry name" value="FDX_ACB"/>
    <property type="match status" value="1"/>
</dbReference>
<dbReference type="PROSITE" id="PS50886">
    <property type="entry name" value="TRBD"/>
    <property type="match status" value="1"/>
</dbReference>
<evidence type="ECO:0000255" key="1">
    <source>
        <dbReference type="HAMAP-Rule" id="MF_00283"/>
    </source>
</evidence>
<organism>
    <name type="scientific">Streptococcus agalactiae serotype Ia (strain ATCC 27591 / A909 / CDC SS700)</name>
    <dbReference type="NCBI Taxonomy" id="205921"/>
    <lineage>
        <taxon>Bacteria</taxon>
        <taxon>Bacillati</taxon>
        <taxon>Bacillota</taxon>
        <taxon>Bacilli</taxon>
        <taxon>Lactobacillales</taxon>
        <taxon>Streptococcaceae</taxon>
        <taxon>Streptococcus</taxon>
    </lineage>
</organism>
<comment type="catalytic activity">
    <reaction evidence="1">
        <text>tRNA(Phe) + L-phenylalanine + ATP = L-phenylalanyl-tRNA(Phe) + AMP + diphosphate + H(+)</text>
        <dbReference type="Rhea" id="RHEA:19413"/>
        <dbReference type="Rhea" id="RHEA-COMP:9668"/>
        <dbReference type="Rhea" id="RHEA-COMP:9699"/>
        <dbReference type="ChEBI" id="CHEBI:15378"/>
        <dbReference type="ChEBI" id="CHEBI:30616"/>
        <dbReference type="ChEBI" id="CHEBI:33019"/>
        <dbReference type="ChEBI" id="CHEBI:58095"/>
        <dbReference type="ChEBI" id="CHEBI:78442"/>
        <dbReference type="ChEBI" id="CHEBI:78531"/>
        <dbReference type="ChEBI" id="CHEBI:456215"/>
        <dbReference type="EC" id="6.1.1.20"/>
    </reaction>
</comment>
<comment type="cofactor">
    <cofactor evidence="1">
        <name>Mg(2+)</name>
        <dbReference type="ChEBI" id="CHEBI:18420"/>
    </cofactor>
    <text evidence="1">Binds 2 magnesium ions per tetramer.</text>
</comment>
<comment type="subunit">
    <text evidence="1">Tetramer of two alpha and two beta subunits.</text>
</comment>
<comment type="subcellular location">
    <subcellularLocation>
        <location>Cytoplasm</location>
    </subcellularLocation>
</comment>
<comment type="similarity">
    <text evidence="1">Belongs to the phenylalanyl-tRNA synthetase beta subunit family. Type 1 subfamily.</text>
</comment>
<feature type="chain" id="PRO_0000232092" description="Phenylalanine--tRNA ligase beta subunit">
    <location>
        <begin position="1"/>
        <end position="801"/>
    </location>
</feature>
<feature type="domain" description="tRNA-binding" evidence="1">
    <location>
        <begin position="39"/>
        <end position="153"/>
    </location>
</feature>
<feature type="domain" description="B5" evidence="1">
    <location>
        <begin position="406"/>
        <end position="481"/>
    </location>
</feature>
<feature type="domain" description="FDX-ACB" evidence="1">
    <location>
        <begin position="708"/>
        <end position="801"/>
    </location>
</feature>
<feature type="binding site" evidence="1">
    <location>
        <position position="459"/>
    </location>
    <ligand>
        <name>Mg(2+)</name>
        <dbReference type="ChEBI" id="CHEBI:18420"/>
        <note>shared with alpha subunit</note>
    </ligand>
</feature>
<feature type="binding site" evidence="1">
    <location>
        <position position="465"/>
    </location>
    <ligand>
        <name>Mg(2+)</name>
        <dbReference type="ChEBI" id="CHEBI:18420"/>
        <note>shared with alpha subunit</note>
    </ligand>
</feature>
<feature type="binding site" evidence="1">
    <location>
        <position position="468"/>
    </location>
    <ligand>
        <name>Mg(2+)</name>
        <dbReference type="ChEBI" id="CHEBI:18420"/>
        <note>shared with alpha subunit</note>
    </ligand>
</feature>
<feature type="binding site" evidence="1">
    <location>
        <position position="469"/>
    </location>
    <ligand>
        <name>Mg(2+)</name>
        <dbReference type="ChEBI" id="CHEBI:18420"/>
        <note>shared with alpha subunit</note>
    </ligand>
</feature>
<protein>
    <recommendedName>
        <fullName evidence="1">Phenylalanine--tRNA ligase beta subunit</fullName>
        <ecNumber evidence="1">6.1.1.20</ecNumber>
    </recommendedName>
    <alternativeName>
        <fullName evidence="1">Phenylalanyl-tRNA synthetase beta subunit</fullName>
        <shortName evidence="1">PheRS</shortName>
    </alternativeName>
</protein>
<accession>Q3K1I7</accession>
<name>SYFB_STRA1</name>
<reference key="1">
    <citation type="journal article" date="2005" name="Proc. Natl. Acad. Sci. U.S.A.">
        <title>Genome analysis of multiple pathogenic isolates of Streptococcus agalactiae: implications for the microbial 'pan-genome'.</title>
        <authorList>
            <person name="Tettelin H."/>
            <person name="Masignani V."/>
            <person name="Cieslewicz M.J."/>
            <person name="Donati C."/>
            <person name="Medini D."/>
            <person name="Ward N.L."/>
            <person name="Angiuoli S.V."/>
            <person name="Crabtree J."/>
            <person name="Jones A.L."/>
            <person name="Durkin A.S."/>
            <person name="DeBoy R.T."/>
            <person name="Davidsen T.M."/>
            <person name="Mora M."/>
            <person name="Scarselli M."/>
            <person name="Margarit y Ros I."/>
            <person name="Peterson J.D."/>
            <person name="Hauser C.R."/>
            <person name="Sundaram J.P."/>
            <person name="Nelson W.C."/>
            <person name="Madupu R."/>
            <person name="Brinkac L.M."/>
            <person name="Dodson R.J."/>
            <person name="Rosovitz M.J."/>
            <person name="Sullivan S.A."/>
            <person name="Daugherty S.C."/>
            <person name="Haft D.H."/>
            <person name="Selengut J."/>
            <person name="Gwinn M.L."/>
            <person name="Zhou L."/>
            <person name="Zafar N."/>
            <person name="Khouri H."/>
            <person name="Radune D."/>
            <person name="Dimitrov G."/>
            <person name="Watkins K."/>
            <person name="O'Connor K.J."/>
            <person name="Smith S."/>
            <person name="Utterback T.R."/>
            <person name="White O."/>
            <person name="Rubens C.E."/>
            <person name="Grandi G."/>
            <person name="Madoff L.C."/>
            <person name="Kasper D.L."/>
            <person name="Telford J.L."/>
            <person name="Wessels M.R."/>
            <person name="Rappuoli R."/>
            <person name="Fraser C.M."/>
        </authorList>
    </citation>
    <scope>NUCLEOTIDE SEQUENCE [LARGE SCALE GENOMIC DNA]</scope>
    <source>
        <strain>ATCC 27591 / A909 / CDC SS700</strain>
    </source>
</reference>
<keyword id="KW-0030">Aminoacyl-tRNA synthetase</keyword>
<keyword id="KW-0067">ATP-binding</keyword>
<keyword id="KW-0963">Cytoplasm</keyword>
<keyword id="KW-0436">Ligase</keyword>
<keyword id="KW-0460">Magnesium</keyword>
<keyword id="KW-0479">Metal-binding</keyword>
<keyword id="KW-0547">Nucleotide-binding</keyword>
<keyword id="KW-0648">Protein biosynthesis</keyword>
<keyword id="KW-0694">RNA-binding</keyword>
<keyword id="KW-0820">tRNA-binding</keyword>
<sequence>MLVSYKWLKELVDVDVTTAELAEKMSTTGIEVEGVETPAEGLSKLVVGHIVSCEDVPDTYLHLCQVDTGDDELRQVVCGAPNVKTGINVIVAVPGARIADNYKIKKGKIRGMESLGMICSLQELGLSESIIPKEFSDGIQILPEGAIPGDSIFSYLDLDDEIIELSITPNRADALSMRGVAHEVAAIYGKKVHFEEKNLIEEAERAADKISVVIESDKVLSYSARIVKNVTVAPSPQWLQNKLMNAGIRPINNVVDVTNYVLLTYGQPMHAFDFDKFDGTTIVARNAENGEKLITLDGEERDLIADDLVIAVNDQPVALAGVMGGQSTEIGSSSKTVVLEAAVFNGTSIRKTSGRLNLRSESSSRFEKGINYDTVSEAMDFAAAMLQELAGGQVLSGQVTEGVLPTEPVEVSTTLGYVNTRLGTELTYTDIEEVFEKLGFAISGSEVKFTVLVPRRRWDIAIQADLVEEIARIYGYEKLPTTLPEAGATAGELTSMQRLRRRVRTVAEGAGLSEIITYALTTPEKAVQFSTQATNITELMWPMTVDRSALRQNVVSGMLDTIAYNVARKNSNLAVYEIGKVFEQTGNPKEDLPTEVETFTFALTGLVEEKDFQTKAKPVDFFYAKGIVEALFIKLKLDVTFVAQKGLASMHPGRTATILLDGKEIGFVGQVHPQTAKQYDIPETYVAEINLSTIESQMNQALIFEDITKYPSVSRDIALLLAESVSHHDIVSAIETSGVKRLTAIKLFDVYAGNNIAEGYKSMAYSLTFQNPNDNLTDEEVAKYMEKITKSLVEKVNAEIR</sequence>
<proteinExistence type="inferred from homology"/>